<evidence type="ECO:0000255" key="1">
    <source>
        <dbReference type="PROSITE-ProRule" id="PRU00041"/>
    </source>
</evidence>
<evidence type="ECO:0000255" key="2">
    <source>
        <dbReference type="PROSITE-ProRule" id="PRU00104"/>
    </source>
</evidence>
<evidence type="ECO:0000255" key="3">
    <source>
        <dbReference type="PROSITE-ProRule" id="PRU00224"/>
    </source>
</evidence>
<evidence type="ECO:0000269" key="4">
    <source>
    </source>
</evidence>
<evidence type="ECO:0000269" key="5">
    <source>
    </source>
</evidence>
<evidence type="ECO:0000269" key="6">
    <source>
    </source>
</evidence>
<evidence type="ECO:0000269" key="7">
    <source>
    </source>
</evidence>
<evidence type="ECO:0000269" key="8">
    <source>
    </source>
</evidence>
<evidence type="ECO:0000269" key="9">
    <source>
    </source>
</evidence>
<evidence type="ECO:0000269" key="10">
    <source>
    </source>
</evidence>
<evidence type="ECO:0000269" key="11">
    <source>
    </source>
</evidence>
<evidence type="ECO:0000269" key="12">
    <source>
    </source>
</evidence>
<evidence type="ECO:0000269" key="13">
    <source>
    </source>
</evidence>
<evidence type="ECO:0000269" key="14">
    <source>
    </source>
</evidence>
<evidence type="ECO:0000269" key="15">
    <source>
    </source>
</evidence>
<evidence type="ECO:0000269" key="16">
    <source>
    </source>
</evidence>
<evidence type="ECO:0000269" key="17">
    <source>
    </source>
</evidence>
<evidence type="ECO:0000269" key="18">
    <source>
    </source>
</evidence>
<evidence type="ECO:0000269" key="19">
    <source>
    </source>
</evidence>
<evidence type="ECO:0000269" key="20">
    <source>
    </source>
</evidence>
<evidence type="ECO:0000305" key="21"/>
<evidence type="ECO:0000305" key="22">
    <source>
    </source>
</evidence>
<evidence type="ECO:0000312" key="23">
    <source>
        <dbReference type="HGNC" id="HGNC:16809"/>
    </source>
</evidence>
<evidence type="ECO:0007829" key="24">
    <source>
        <dbReference type="PDB" id="1ZVD"/>
    </source>
</evidence>
<evidence type="ECO:0007829" key="25">
    <source>
        <dbReference type="PDB" id="2DJY"/>
    </source>
</evidence>
<evidence type="ECO:0007829" key="26">
    <source>
        <dbReference type="PDB" id="2JQZ"/>
    </source>
</evidence>
<evidence type="ECO:0007829" key="27">
    <source>
        <dbReference type="PDB" id="2KXQ"/>
    </source>
</evidence>
<evidence type="ECO:0007829" key="28">
    <source>
        <dbReference type="PDB" id="7M3Q"/>
    </source>
</evidence>
<reference key="1">
    <citation type="journal article" date="2000" name="Mol. Cell">
        <title>Smad7 binds to Smurf2 to form an E3 ubiquitin ligase that targets the TGF-beta receptor for degradation.</title>
        <authorList>
            <person name="Kavsak P."/>
            <person name="Rasmussen R.K."/>
            <person name="Causing C.G."/>
            <person name="Bonni S."/>
            <person name="Zhu H."/>
            <person name="Thomsen G.H."/>
            <person name="Wrana J.L."/>
        </authorList>
    </citation>
    <scope>FUNCTION</scope>
    <scope>NUCLEOTIDE SEQUENCE [MRNA]</scope>
    <scope>MUTAGENESIS OF 251-PRO--VAL-284 AND 297-GLY--LEU-330</scope>
    <scope>INTERACTION WITH SMAD7 AND TGFBR1</scope>
</reference>
<reference key="2">
    <citation type="journal article" date="2000" name="J. Biol. Chem.">
        <title>Smurf2 Is a ubiquitin E3 ligase mediating proteasome-dependent degradation of Smad2 in transforming growth factor-beta signaling.</title>
        <authorList>
            <person name="Lin X."/>
            <person name="Liang M."/>
            <person name="Feng X.-H."/>
        </authorList>
    </citation>
    <scope>NUCLEOTIDE SEQUENCE [MRNA]</scope>
    <scope>FUNCTION</scope>
    <scope>CATALYTIC ACTIVITY</scope>
    <scope>MUTAGENESIS OF 251-PRO--VAL-284 AND CYS-716</scope>
</reference>
<reference key="3">
    <citation type="journal article" date="2001" name="Proc. Natl. Acad. Sci. U.S.A.">
        <title>Regulation of Smad degradation and activity by Smurf2, an E3 ubiquitin ligase.</title>
        <authorList>
            <person name="Zhang Y."/>
            <person name="Chang C."/>
            <person name="Gehling D.J."/>
            <person name="Hemmati-Brivanlou A."/>
            <person name="Derynck R."/>
        </authorList>
    </citation>
    <scope>FUNCTION</scope>
    <scope>NUCLEOTIDE SEQUENCE [MRNA]</scope>
    <scope>INTERACTION WITH SMAD1; SMAD2; SMAD3; SMAD6 AND SMAD7</scope>
    <scope>MUTAGENESIS OF CYS-716</scope>
</reference>
<reference key="4">
    <citation type="journal article" date="2004" name="Genome Res.">
        <title>The status, quality, and expansion of the NIH full-length cDNA project: the Mammalian Gene Collection (MGC).</title>
        <authorList>
            <consortium name="The MGC Project Team"/>
        </authorList>
    </citation>
    <scope>NUCLEOTIDE SEQUENCE [LARGE SCALE MRNA]</scope>
    <source>
        <tissue>Brain</tissue>
    </source>
</reference>
<reference key="5">
    <citation type="journal article" date="2001" name="Nat. Cell Biol.">
        <title>TGF-beta induces assembly of a Smad2-Smurf2 ubiquitin ligase complex that targets SnoN for degradation.</title>
        <authorList>
            <person name="Bonni S."/>
            <person name="Wang H.R."/>
            <person name="Causing C.G."/>
            <person name="Kavsak P."/>
            <person name="Stroschein S.L."/>
            <person name="Luo K."/>
            <person name="Wrana J.L."/>
        </authorList>
    </citation>
    <scope>FUNCTION</scope>
    <scope>INTERACTION WITH SMAD2; SMAD3 AND SNON</scope>
</reference>
<reference key="6">
    <citation type="journal article" date="2003" name="Nat. Cell Biol.">
        <title>Distinct endocytic pathways regulate TGF-beta receptor signalling and turnover.</title>
        <authorList>
            <person name="Di Guglielmo G.M."/>
            <person name="Le Roy C."/>
            <person name="Goodfellow A.F."/>
            <person name="Wrana J.L."/>
        </authorList>
    </citation>
    <scope>FUNCTION</scope>
    <scope>SUBCELLULAR LOCATION</scope>
    <scope>MUTAGENESIS OF CYS-716</scope>
</reference>
<reference key="7">
    <citation type="journal article" date="2003" name="Nat. Cell Biol.">
        <authorList>
            <person name="Di Guglielmo G.M."/>
            <person name="Le Roy C."/>
            <person name="Goodfellow A.F."/>
            <person name="Wrana J.L."/>
        </authorList>
    </citation>
    <scope>ERRATUM OF PUBMED:12717440</scope>
</reference>
<reference key="8">
    <citation type="journal article" date="2003" name="Br. J. Cancer">
        <title>The RING-H2 protein RNF11 is overexpressed in breast cancer and is a target of Smurf2 E3 ligase.</title>
        <authorList>
            <person name="Subramaniam V."/>
            <person name="Li H."/>
            <person name="Wong M.J."/>
            <person name="Kitching R."/>
            <person name="Attisano L."/>
            <person name="Wrana J."/>
            <person name="Zubovits J."/>
            <person name="Burger A.M."/>
            <person name="Seth A.K."/>
        </authorList>
    </citation>
    <scope>INTERACTION WITH RNF11</scope>
</reference>
<reference key="9">
    <citation type="journal article" date="2004" name="Oncogene">
        <title>An RNF11: Smurf2 complex mediates ubiquitination of the AMSH protein.</title>
        <authorList>
            <person name="Li H."/>
            <person name="Seth A.K."/>
        </authorList>
    </citation>
    <scope>INTERACTION WITH STAMBP AND RNF11</scope>
</reference>
<reference key="10">
    <citation type="journal article" date="2008" name="Biochem. Biophys. Res. Commun.">
        <title>AIMP1/p43 downregulates TGF-beta signaling via stabilization of smurf2.</title>
        <authorList>
            <person name="Lee Y.S."/>
            <person name="Han J.M."/>
            <person name="Son S.H."/>
            <person name="Choi J.W."/>
            <person name="Jeon E.J."/>
            <person name="Bae S.-C."/>
            <person name="Park Y.I."/>
            <person name="Kim S."/>
        </authorList>
    </citation>
    <scope>FUNCTION</scope>
    <scope>INTERACTION WITH AIMP1</scope>
</reference>
<reference key="11">
    <citation type="journal article" date="2009" name="EMBO Rep.">
        <title>Control of the activity of WW-HECT domain E3 ubiquitin ligases by NDFIP proteins.</title>
        <authorList>
            <person name="Mund T."/>
            <person name="Pelham H.R."/>
        </authorList>
    </citation>
    <scope>ACTIVATION BY NDFIP1 AND NDFIP2</scope>
    <scope>AUTO-UBIQUITINATION</scope>
</reference>
<reference key="12">
    <citation type="journal article" date="2011" name="EMBO J.">
        <title>SCF(FBXL15) regulates BMP signalling by directing the degradation of HECT-type ubiquitin ligase Smurf1.</title>
        <authorList>
            <person name="Cui Y."/>
            <person name="He S."/>
            <person name="Xing C."/>
            <person name="Lu K."/>
            <person name="Wang J."/>
            <person name="Xing G."/>
            <person name="Meng A."/>
            <person name="Jia S."/>
            <person name="He F."/>
            <person name="Zhang L."/>
        </authorList>
    </citation>
    <scope>UBIQUITINATION</scope>
</reference>
<reference key="13">
    <citation type="journal article" date="2019" name="Cell Death Dis.">
        <title>TTC3 contributes to TGF-beta1-induced epithelial-mesenchymal transition and myofibroblast differentiation, potentially through SMURF2 ubiquitylation and degradation.</title>
        <authorList>
            <person name="Kim J.H."/>
            <person name="Ham S."/>
            <person name="Lee Y."/>
            <person name="Suh G.Y."/>
            <person name="Lee Y.S."/>
        </authorList>
    </citation>
    <scope>FUNCTION</scope>
    <scope>INTERACTION WITH TTC3</scope>
    <scope>UBIQUITINATION</scope>
    <scope>MUTAGENESIS OF 29-PHE-PHE-30 AND CYS-716</scope>
</reference>
<reference key="14">
    <citation type="journal article" date="2021" name="Viruses">
        <title>Ubiquitin Ligase SMURF2 Interacts with Filovirus VP40 and Promotes Egress of VP40 VLPs.</title>
        <authorList>
            <person name="Shepley-McTaggart A."/>
            <person name="Schwoerer M.P."/>
            <person name="Sagum C.A."/>
            <person name="Bedford M.T."/>
            <person name="Jaladanki C.K."/>
            <person name="Fan H."/>
            <person name="Cassel J."/>
            <person name="Harty R.N."/>
        </authorList>
    </citation>
    <scope>FUNCTION (MICROBIAL INFECTION)</scope>
    <scope>INTERACTION WITH EBOV AND MARV PROTEIN VP40 (MICROBIAL INFECTION)</scope>
    <scope>DOMAIN (MICROBIAL INFECTION)</scope>
    <scope>MUTAGENESIS OF CYS-716</scope>
</reference>
<reference key="15">
    <citation type="journal article" date="2005" name="Mol. Cell">
        <title>Regulation of Smurf2 ubiquitin ligase activity by anchoring the E2 to the HECT domain.</title>
        <authorList>
            <person name="Ogunjimi A.A."/>
            <person name="Briant D.J."/>
            <person name="Pece-Barbara N."/>
            <person name="Le Roy C."/>
            <person name="Di Guglielmo G.M."/>
            <person name="Kavsak P."/>
            <person name="Rasmussen R.K."/>
            <person name="Seet B.T."/>
            <person name="Sicheri F."/>
            <person name="Wrana J.L."/>
        </authorList>
    </citation>
    <scope>X-RAY CRYSTALLOGRAPHY (2.1 ANGSTROMS) OF 369-748</scope>
    <scope>INTERACTION WITH SMAD7</scope>
    <scope>MUTAGENESIS OF TRP-535; HIS-547 AND TYR-581</scope>
</reference>
<reference key="16">
    <citation type="journal article" date="2006" name="J. Biol. Chem.">
        <title>An expanded WW domain recognition motif revealed by the interaction between Smad7 and the E3 ubiquitin ligase Smurf2.</title>
        <authorList>
            <person name="Chong P.A."/>
            <person name="Lin H."/>
            <person name="Wrana J.L."/>
            <person name="Forman-Kay J.D."/>
        </authorList>
    </citation>
    <scope>STRUCTURE BY NMR OF 297-333 IN COMPLEX WITH SMAD7</scope>
</reference>
<reference key="17">
    <citation type="journal article" date="2011" name="Mol. Cell. Biol.">
        <title>TSC-22 promotes transforming growth factor beta-mediated cardiac myofibroblast differentiation by antagonizing Smad7 activity.</title>
        <authorList>
            <person name="Yan X."/>
            <person name="Zhang J."/>
            <person name="Pan L."/>
            <person name="Wang P."/>
            <person name="Xue H."/>
            <person name="Zhang L."/>
            <person name="Gao X."/>
            <person name="Zhao X."/>
            <person name="Ning Y."/>
            <person name="Chen Y.G."/>
        </authorList>
    </citation>
    <scope>FUNCTION</scope>
</reference>
<reference key="18">
    <citation type="journal article" date="2019" name="Cell Death Differ.">
        <title>TRAF4 positively regulates the osteogenic differentiation of mesenchymal stem cells by acting as an E3 ubiquitin ligase to degrade Smurf2.</title>
        <authorList>
            <person name="Li J."/>
            <person name="Wang P."/>
            <person name="Xie Z."/>
            <person name="Wang S."/>
            <person name="Cen S."/>
            <person name="Li M."/>
            <person name="Liu W."/>
            <person name="Tang S."/>
            <person name="Ye G."/>
            <person name="Zheng G."/>
            <person name="Su H."/>
            <person name="Ma M."/>
            <person name="Wu X."/>
            <person name="Wu Y."/>
            <person name="Shen H."/>
        </authorList>
    </citation>
    <scope>UBIQUITINATION BY TRAF4</scope>
</reference>
<reference key="19">
    <citation type="journal article" date="2007" name="Cell">
        <title>Autoinhibition of the HECT-type ubiquitin ligase Smurf2 through its C2 domain.</title>
        <authorList>
            <person name="Wiesner S."/>
            <person name="Ogunjimi A.A."/>
            <person name="Wang H.R."/>
            <person name="Rotin D."/>
            <person name="Sicheri F."/>
            <person name="Wrana J.L."/>
            <person name="Forman-Kay J.D."/>
        </authorList>
    </citation>
    <scope>STRUCTURE BY NMR OF 10-140</scope>
    <scope>AUTOINHIBITION BY C2 DOMAIN</scope>
    <scope>MUTAGENESIS OF 29-PHE-PHE-30; THR-56 AND LEU-57</scope>
</reference>
<accession>Q9HAU4</accession>
<accession>Q52LL1</accession>
<accession>Q9H260</accession>
<gene>
    <name evidence="23" type="primary">SMURF2</name>
</gene>
<protein>
    <recommendedName>
        <fullName>E3 ubiquitin-protein ligase SMURF2</fullName>
        <shortName>hSMURF2</shortName>
        <ecNumber evidence="4">2.3.2.26</ecNumber>
    </recommendedName>
    <alternativeName>
        <fullName>HECT-type E3 ubiquitin transferase SMURF2</fullName>
    </alternativeName>
    <alternativeName>
        <fullName>SMAD ubiquitination regulatory factor 2</fullName>
    </alternativeName>
    <alternativeName>
        <fullName>SMAD-specific E3 ubiquitin-protein ligase 2</fullName>
    </alternativeName>
</protein>
<keyword id="KW-0002">3D-structure</keyword>
<keyword id="KW-1003">Cell membrane</keyword>
<keyword id="KW-0963">Cytoplasm</keyword>
<keyword id="KW-0945">Host-virus interaction</keyword>
<keyword id="KW-1017">Isopeptide bond</keyword>
<keyword id="KW-0472">Membrane</keyword>
<keyword id="KW-0539">Nucleus</keyword>
<keyword id="KW-1267">Proteomics identification</keyword>
<keyword id="KW-1185">Reference proteome</keyword>
<keyword id="KW-0677">Repeat</keyword>
<keyword id="KW-0808">Transferase</keyword>
<keyword id="KW-0832">Ubl conjugation</keyword>
<keyword id="KW-0833">Ubl conjugation pathway</keyword>
<comment type="function">
    <text evidence="4 5 6 7 8 14 17 18">E3 ubiquitin-protein ligase which accepts ubiquitin from an E2 ubiquitin-conjugating enzyme in the form of a thioester and then directly transfers the ubiquitin to targeted substrates (PubMed:11016919). Interacts with SMAD7 to trigger SMAD7-mediated transforming growth factor beta/TGF-beta receptor ubiquitin-dependent degradation, thereby down-regulating TGF-beta signaling (PubMed:11163210, PubMed:12717440, PubMed:21791611). In addition, interaction with SMAD7 activates autocatalytic degradation, which is prevented by interaction with AIMP1 (PubMed:18448069). Also forms a stable complex with TGF-beta receptor-mediated phosphorylated SMAD1, SMAD2 and SMAD3, and targets SMAD1 and SMAD2 for ubiquitination and proteasome-mediated degradation (PubMed:11016919, PubMed:11158580, PubMed:11389444). SMAD2 may recruit substrates, such as SNON, for ubiquitin-dependent degradation (PubMed:11389444). Negatively regulates TGFB1-induced epithelial-mesenchymal transition and myofibroblast differentiation (PubMed:30696809).</text>
</comment>
<comment type="function">
    <text evidence="20">(Microbial infection) In case of filoviruses Ebola/EBOV and Marburg/MARV infection, the complex formed by viral matrix protein VP40 and SMURF2 facilitates virus budding.</text>
</comment>
<comment type="catalytic activity">
    <reaction evidence="4">
        <text>S-ubiquitinyl-[E2 ubiquitin-conjugating enzyme]-L-cysteine + [acceptor protein]-L-lysine = [E2 ubiquitin-conjugating enzyme]-L-cysteine + N(6)-ubiquitinyl-[acceptor protein]-L-lysine.</text>
        <dbReference type="EC" id="2.3.2.26"/>
    </reaction>
</comment>
<comment type="activity regulation">
    <text evidence="15">Activated by NDFIP1- and NDFIP2-binding.</text>
</comment>
<comment type="pathway">
    <text>Protein modification; protein ubiquitination.</text>
</comment>
<comment type="subunit">
    <text evidence="5 6 7 9 10 11 12 14 20 22">Interacts (via WW domains) with SMAD1 (PubMed:11158580). Interacts (via WW domains) with SMAD2 (via PY-motif) (PubMed:11158580, PubMed:11389444). Interacts (via WW domains) with SMAD3 (via PY-motif) (PubMed:11158580, PubMed:11389444). Interacts with SMAD6 (PubMed:11158580). Interacts with SMAD7 (via PY-motif) and TGFBR1; SMAD7 recruits SMURF2 to the TGF-beta receptor and regulates its degradation (PubMed:11158580, PubMed:11163210, PubMed:16061177, PubMed:16641086, PubMed:33673144). Does not interact with SMAD4; SMAD4 lacks a PY-motif (PubMed:11158580). Interacts with AIMP1 (PubMed:18448069). Interacts with SNON (PubMed:11389444). Interacts with STAMBP and RNF11 (PubMed:14562029, PubMed:14755250). May interact with NDFIP1 and NDFIP2; this interaction induces the E3 ubiquitin-protein ligase activity. Interacts with TTC3 (Probable).</text>
</comment>
<comment type="subunit">
    <text evidence="20">(Microbial infection) Interacts (via WW domains) with EBOV and MARV VP40 (via PPXY motif); the interaction facilitates VP40 virus-like particle budding.</text>
</comment>
<comment type="interaction">
    <interactant intactId="EBI-396727">
        <id>Q9HAU4</id>
    </interactant>
    <interactant intactId="EBI-724310">
        <id>Q15038</id>
        <label>DAZAP2</label>
    </interactant>
    <organismsDiffer>false</organismsDiffer>
    <experiments>2</experiments>
</comment>
<comment type="interaction">
    <interactant intactId="EBI-396727">
        <id>Q9HAU4</id>
    </interactant>
    <interactant intactId="EBI-6144096">
        <id>Q9H469</id>
        <label>FBXL15</label>
    </interactant>
    <organismsDiffer>false</organismsDiffer>
    <experiments>3</experiments>
</comment>
<comment type="interaction">
    <interactant intactId="EBI-396727">
        <id>Q9HAU4</id>
    </interactant>
    <interactant intactId="EBI-16129814">
        <id>P46934-4</id>
        <label>NEDD4</label>
    </interactant>
    <organismsDiffer>false</organismsDiffer>
    <experiments>2</experiments>
</comment>
<comment type="interaction">
    <interactant intactId="EBI-396727">
        <id>Q9HAU4</id>
    </interactant>
    <interactant intactId="EBI-396669">
        <id>Q9Y3C5</id>
        <label>RNF11</label>
    </interactant>
    <organismsDiffer>false</organismsDiffer>
    <experiments>5</experiments>
</comment>
<comment type="interaction">
    <interactant intactId="EBI-396727">
        <id>Q9HAU4</id>
    </interactant>
    <interactant intactId="EBI-743502">
        <id>Q8WWV3</id>
        <label>RTN4IP1</label>
    </interactant>
    <organismsDiffer>false</organismsDiffer>
    <experiments>3</experiments>
</comment>
<comment type="interaction">
    <interactant intactId="EBI-396727">
        <id>Q9HAU4</id>
    </interactant>
    <interactant intactId="EBI-1567153">
        <id>Q15797</id>
        <label>SMAD1</label>
    </interactant>
    <organismsDiffer>false</organismsDiffer>
    <experiments>7</experiments>
</comment>
<comment type="interaction">
    <interactant intactId="EBI-396727">
        <id>Q9HAU4</id>
    </interactant>
    <interactant intactId="EBI-1040141">
        <id>Q15796</id>
        <label>SMAD2</label>
    </interactant>
    <organismsDiffer>false</organismsDiffer>
    <experiments>6</experiments>
</comment>
<comment type="interaction">
    <interactant intactId="EBI-396727">
        <id>Q9HAU4</id>
    </interactant>
    <interactant intactId="EBI-347161">
        <id>P84022</id>
        <label>SMAD3</label>
    </interactant>
    <organismsDiffer>false</organismsDiffer>
    <experiments>8</experiments>
</comment>
<comment type="interaction">
    <interactant intactId="EBI-396727">
        <id>Q9HAU4</id>
    </interactant>
    <interactant intactId="EBI-6391136">
        <id>Q99717</id>
        <label>SMAD5</label>
    </interactant>
    <organismsDiffer>false</organismsDiffer>
    <experiments>3</experiments>
</comment>
<comment type="interaction">
    <interactant intactId="EBI-396727">
        <id>Q9HAU4</id>
    </interactant>
    <interactant intactId="EBI-3861591">
        <id>O15105</id>
        <label>SMAD7</label>
    </interactant>
    <organismsDiffer>false</organismsDiffer>
    <experiments>7</experiments>
</comment>
<comment type="interaction">
    <interactant intactId="EBI-396727">
        <id>Q9HAU4</id>
    </interactant>
    <interactant intactId="EBI-396727">
        <id>Q9HAU4</id>
        <label>SMURF2</label>
    </interactant>
    <organismsDiffer>false</organismsDiffer>
    <experiments>6</experiments>
</comment>
<comment type="interaction">
    <interactant intactId="EBI-396727">
        <id>Q9HAU4</id>
    </interactant>
    <interactant intactId="EBI-2681313">
        <id>P53804</id>
        <label>TTC3</label>
    </interactant>
    <organismsDiffer>false</organismsDiffer>
    <experiments>2</experiments>
</comment>
<comment type="interaction">
    <interactant intactId="EBI-396727">
        <id>Q9HAU4</id>
    </interactant>
    <interactant intactId="EBI-413034">
        <id>P0CG47</id>
        <label>UBB</label>
    </interactant>
    <organismsDiffer>false</organismsDiffer>
    <experiments>4</experiments>
</comment>
<comment type="interaction">
    <interactant intactId="EBI-396727">
        <id>Q9HAU4</id>
    </interactant>
    <interactant intactId="EBI-6863741">
        <id>PRO_0000037548</id>
        <dbReference type="UniProtKB" id="Q9WMX2"/>
    </interactant>
    <organismsDiffer>true</organismsDiffer>
    <experiments>2</experiments>
</comment>
<comment type="subcellular location">
    <subcellularLocation>
        <location evidence="8">Nucleus</location>
    </subcellularLocation>
    <subcellularLocation>
        <location evidence="8">Cytoplasm</location>
    </subcellularLocation>
    <subcellularLocation>
        <location evidence="8">Cell membrane</location>
    </subcellularLocation>
    <subcellularLocation>
        <location evidence="8">Membrane raft</location>
    </subcellularLocation>
    <text>Cytoplasmic in the presence of SMAD7. Colocalizes with CAV1, SMAD7 and TGF-beta receptor in membrane rafts.</text>
</comment>
<comment type="tissue specificity">
    <text>Widely expressed.</text>
</comment>
<comment type="domain">
    <text>The second and third WW domains are responsible for interaction with the PY-motif of R-SMAD (SMAD1, SMAD2 and SMAD3).</text>
</comment>
<comment type="domain">
    <text>The C2 domain is involved in autoinhibition of the catalytic activity by interacting with the HECT domain.</text>
</comment>
<comment type="domain">
    <text evidence="20">(Microbial infection) The WW domains mediate binding with matrix protein VP40.</text>
</comment>
<comment type="PTM">
    <text evidence="15 16 18 19">Auto-ubiquitinated and ubiquitinated in the presence of RNF11 and UBE2D1 (PubMed:19343052, PubMed:30696809). Ubiquitinated by the SCF(FBXL15) complex and TTC3, leading to its degradation by the proteasome (PubMed:21572392, PubMed:30696809). 'Lys-48'-linked polyubiquitination mediated by TRAF4 at Lys-119 leads to SMURF2 proteasomal degradation (PubMed:31076633).</text>
</comment>
<proteinExistence type="evidence at protein level"/>
<name>SMUF2_HUMAN</name>
<feature type="chain" id="PRO_0000120329" description="E3 ubiquitin-protein ligase SMURF2">
    <location>
        <begin position="1"/>
        <end position="748"/>
    </location>
</feature>
<feature type="domain" description="C2" evidence="1">
    <location>
        <begin position="1"/>
        <end position="119"/>
    </location>
</feature>
<feature type="domain" description="WW 1" evidence="3">
    <location>
        <begin position="157"/>
        <end position="190"/>
    </location>
</feature>
<feature type="domain" description="WW 2" evidence="3">
    <location>
        <begin position="251"/>
        <end position="284"/>
    </location>
</feature>
<feature type="domain" description="WW 3" evidence="3">
    <location>
        <begin position="297"/>
        <end position="330"/>
    </location>
</feature>
<feature type="domain" description="HECT" evidence="2">
    <location>
        <begin position="414"/>
        <end position="748"/>
    </location>
</feature>
<feature type="active site" description="Glycyl thioester intermediate" evidence="2">
    <location>
        <position position="716"/>
    </location>
</feature>
<feature type="cross-link" description="Glycyl lysine isopeptide (Lys-Gly) (interchain with G-Cter in ubiquitin)" evidence="19">
    <location>
        <position position="119"/>
    </location>
</feature>
<feature type="mutagenesis site" description="Increases auto-ubiquitination." evidence="13 18">
    <original>FF</original>
    <variation>AA</variation>
    <location>
        <begin position="29"/>
        <end position="30"/>
    </location>
</feature>
<feature type="mutagenesis site" description="Increases auto-ubiquitination; when associated with A-57." evidence="13">
    <original>T</original>
    <variation>A</variation>
    <location>
        <position position="56"/>
    </location>
</feature>
<feature type="mutagenesis site" description="Increases auto-ubiquitination; when associated with A-56." evidence="13">
    <original>L</original>
    <variation>A</variation>
    <location>
        <position position="57"/>
    </location>
</feature>
<feature type="mutagenesis site" description="Abolishes interaction with SMAD2 and SMAD7." evidence="4 6">
    <location>
        <begin position="251"/>
        <end position="284"/>
    </location>
</feature>
<feature type="mutagenesis site" description="Abolishes interaction with SMAD7." evidence="6">
    <location>
        <begin position="297"/>
        <end position="330"/>
    </location>
</feature>
<feature type="mutagenesis site" description="Loss of catalytic activity." evidence="11">
    <original>W</original>
    <variation>A</variation>
    <location>
        <position position="535"/>
    </location>
</feature>
<feature type="mutagenesis site" description="Loss of catalytic activity." evidence="11">
    <original>W</original>
    <variation>D</variation>
    <location>
        <position position="535"/>
    </location>
</feature>
<feature type="mutagenesis site" description="Partial loss of catalytic activity." evidence="11">
    <original>H</original>
    <variation>A</variation>
    <location>
        <position position="547"/>
    </location>
</feature>
<feature type="mutagenesis site" description="Activates autocatalytic activity." evidence="11">
    <original>H</original>
    <variation>F</variation>
    <variation>I</variation>
    <location>
        <position position="547"/>
    </location>
</feature>
<feature type="mutagenesis site" description="Loss of catalytic activity." evidence="11">
    <original>Y</original>
    <variation>A</variation>
    <location>
        <position position="581"/>
    </location>
</feature>
<feature type="mutagenesis site" description="Loss of catalytic activity. Increases SMAD7-bound TGF-beta receptors in membrane rafts. Decreases interaction with TTC3. Decreased VP40 virus-like particle budding." evidence="4 5 8 18 20">
    <original>C</original>
    <variation>A</variation>
    <location>
        <position position="716"/>
    </location>
</feature>
<feature type="mutagenesis site" description="Loss of activity. Loss of ability to ubiquitinate SMAD1 and SMAD2 and no down-regulation of SMAD1 and SMAD2 protein levels." evidence="4 5 8">
    <original>C</original>
    <variation>G</variation>
    <location>
        <position position="716"/>
    </location>
</feature>
<feature type="sequence conflict" description="In Ref. 2; AAG45422." evidence="21" ref="2">
    <original>G</original>
    <variation>R</variation>
    <location>
        <position position="6"/>
    </location>
</feature>
<feature type="strand" evidence="26">
    <location>
        <begin position="12"/>
        <end position="23"/>
    </location>
</feature>
<feature type="strand" evidence="26">
    <location>
        <begin position="35"/>
        <end position="41"/>
    </location>
</feature>
<feature type="turn" evidence="26">
    <location>
        <begin position="42"/>
        <end position="44"/>
    </location>
</feature>
<feature type="strand" evidence="26">
    <location>
        <begin position="48"/>
        <end position="50"/>
    </location>
</feature>
<feature type="strand" evidence="26">
    <location>
        <begin position="60"/>
        <end position="69"/>
    </location>
</feature>
<feature type="strand" evidence="26">
    <location>
        <begin position="75"/>
        <end position="81"/>
    </location>
</feature>
<feature type="helix" evidence="26">
    <location>
        <begin position="82"/>
        <end position="87"/>
    </location>
</feature>
<feature type="strand" evidence="26">
    <location>
        <begin position="93"/>
        <end position="99"/>
    </location>
</feature>
<feature type="helix" evidence="26">
    <location>
        <begin position="101"/>
        <end position="110"/>
    </location>
</feature>
<feature type="strand" evidence="26">
    <location>
        <begin position="113"/>
        <end position="115"/>
    </location>
</feature>
<feature type="strand" evidence="26">
    <location>
        <begin position="131"/>
        <end position="138"/>
    </location>
</feature>
<feature type="strand" evidence="27">
    <location>
        <begin position="258"/>
        <end position="262"/>
    </location>
</feature>
<feature type="turn" evidence="27">
    <location>
        <begin position="263"/>
        <end position="265"/>
    </location>
</feature>
<feature type="strand" evidence="27">
    <location>
        <begin position="266"/>
        <end position="271"/>
    </location>
</feature>
<feature type="turn" evidence="27">
    <location>
        <begin position="272"/>
        <end position="275"/>
    </location>
</feature>
<feature type="strand" evidence="27">
    <location>
        <begin position="276"/>
        <end position="280"/>
    </location>
</feature>
<feature type="strand" evidence="27">
    <location>
        <begin position="282"/>
        <end position="284"/>
    </location>
</feature>
<feature type="strand" evidence="27">
    <location>
        <begin position="286"/>
        <end position="288"/>
    </location>
</feature>
<feature type="helix" evidence="27">
    <location>
        <begin position="293"/>
        <end position="295"/>
    </location>
</feature>
<feature type="strand" evidence="25">
    <location>
        <begin position="301"/>
        <end position="307"/>
    </location>
</feature>
<feature type="strand" evidence="25">
    <location>
        <begin position="309"/>
        <end position="311"/>
    </location>
</feature>
<feature type="strand" evidence="25">
    <location>
        <begin position="313"/>
        <end position="317"/>
    </location>
</feature>
<feature type="turn" evidence="25">
    <location>
        <begin position="318"/>
        <end position="321"/>
    </location>
</feature>
<feature type="strand" evidence="25">
    <location>
        <begin position="322"/>
        <end position="326"/>
    </location>
</feature>
<feature type="turn" evidence="25">
    <location>
        <begin position="328"/>
        <end position="330"/>
    </location>
</feature>
<feature type="helix" evidence="24">
    <location>
        <begin position="372"/>
        <end position="386"/>
    </location>
</feature>
<feature type="strand" evidence="24">
    <location>
        <begin position="392"/>
        <end position="397"/>
    </location>
</feature>
<feature type="helix" evidence="24">
    <location>
        <begin position="402"/>
        <end position="411"/>
    </location>
</feature>
<feature type="helix" evidence="24">
    <location>
        <begin position="415"/>
        <end position="419"/>
    </location>
</feature>
<feature type="strand" evidence="24">
    <location>
        <begin position="420"/>
        <end position="426"/>
    </location>
</feature>
<feature type="helix" evidence="24">
    <location>
        <begin position="434"/>
        <end position="449"/>
    </location>
</feature>
<feature type="helix" evidence="24">
    <location>
        <begin position="452"/>
        <end position="454"/>
    </location>
</feature>
<feature type="strand" evidence="24">
    <location>
        <begin position="455"/>
        <end position="460"/>
    </location>
</feature>
<feature type="strand" evidence="24">
    <location>
        <begin position="463"/>
        <end position="469"/>
    </location>
</feature>
<feature type="helix" evidence="24">
    <location>
        <begin position="473"/>
        <end position="475"/>
    </location>
</feature>
<feature type="helix" evidence="24">
    <location>
        <begin position="479"/>
        <end position="495"/>
    </location>
</feature>
<feature type="helix" evidence="24">
    <location>
        <begin position="506"/>
        <end position="512"/>
    </location>
</feature>
<feature type="helix" evidence="24">
    <location>
        <begin position="522"/>
        <end position="525"/>
    </location>
</feature>
<feature type="helix" evidence="24">
    <location>
        <begin position="527"/>
        <end position="538"/>
    </location>
</feature>
<feature type="turn" evidence="24">
    <location>
        <begin position="542"/>
        <end position="544"/>
    </location>
</feature>
<feature type="strand" evidence="24">
    <location>
        <begin position="549"/>
        <end position="555"/>
    </location>
</feature>
<feature type="strand" evidence="24">
    <location>
        <begin position="558"/>
        <end position="565"/>
    </location>
</feature>
<feature type="helix" evidence="28">
    <location>
        <begin position="568"/>
        <end position="570"/>
    </location>
</feature>
<feature type="turn" evidence="24">
    <location>
        <begin position="574"/>
        <end position="577"/>
    </location>
</feature>
<feature type="helix" evidence="24">
    <location>
        <begin position="578"/>
        <end position="590"/>
    </location>
</feature>
<feature type="turn" evidence="24">
    <location>
        <begin position="591"/>
        <end position="594"/>
    </location>
</feature>
<feature type="helix" evidence="24">
    <location>
        <begin position="595"/>
        <end position="608"/>
    </location>
</feature>
<feature type="helix" evidence="24">
    <location>
        <begin position="611"/>
        <end position="614"/>
    </location>
</feature>
<feature type="helix" evidence="24">
    <location>
        <begin position="619"/>
        <end position="627"/>
    </location>
</feature>
<feature type="strand" evidence="24">
    <location>
        <begin position="629"/>
        <end position="631"/>
    </location>
</feature>
<feature type="helix" evidence="24">
    <location>
        <begin position="634"/>
        <end position="639"/>
    </location>
</feature>
<feature type="strand" evidence="24">
    <location>
        <begin position="641"/>
        <end position="646"/>
    </location>
</feature>
<feature type="helix" evidence="24">
    <location>
        <begin position="651"/>
        <end position="662"/>
    </location>
</feature>
<feature type="helix" evidence="24">
    <location>
        <begin position="665"/>
        <end position="676"/>
    </location>
</feature>
<feature type="strand" evidence="24">
    <location>
        <begin position="679"/>
        <end position="681"/>
    </location>
</feature>
<feature type="helix" evidence="24">
    <location>
        <begin position="686"/>
        <end position="688"/>
    </location>
</feature>
<feature type="strand" evidence="28">
    <location>
        <begin position="692"/>
        <end position="695"/>
    </location>
</feature>
<feature type="strand" evidence="24">
    <location>
        <begin position="698"/>
        <end position="702"/>
    </location>
</feature>
<feature type="strand" evidence="24">
    <location>
        <begin position="712"/>
        <end position="714"/>
    </location>
</feature>
<feature type="helix" evidence="24">
    <location>
        <begin position="715"/>
        <end position="717"/>
    </location>
</feature>
<feature type="strand" evidence="24">
    <location>
        <begin position="719"/>
        <end position="722"/>
    </location>
</feature>
<feature type="helix" evidence="24">
    <location>
        <begin position="728"/>
        <end position="739"/>
    </location>
</feature>
<sequence length="748" mass="86196">MSNPGGRRNGPVKLRLTVLCAKNLVKKDFFRLPDPFAKVVVDGSGQCHSTDTVKNTLDPKWNQHYDLYIGKSDSVTISVWNHKKIHKKQGAGFLGCVRLLSNAINRLKDTGYQRLDLCKLGPNDNDTVRGQIVVSLQSRDRIGTGGQVVDCSRLFDNDLPDGWEERRTASGRIQYLNHITRTTQWERPTRPASEYSSPGRPLSCFVDENTPISGTNGATCGQSSDPRLAERRVRSQRHRNYMSRTHLHTPPDLPEGYEQRTTQQGQVYFLHTQTGVSTWHDPRVPRDLSNINCEELGPLPPGWEIRNTATGRVYFVDHNNRTTQFTDPRLSANLHLVLNRQNQLKDQQQQQVVSLCPDDTECLTVPRYKRDLVQKLKILRQELSQQQPQAGHCRIEVSREEIFEESYRQVMKMRPKDLWKRLMIKFRGEEGLDYGGVAREWLYLLSHEMLNPYYGLFQYSRDDIYTLQINPDSAVNPEHLSYFHFVGRIMGMAVFHGHYIDGGFTLPFYKQLLGKSITLDDMELVDPDLHNSLVWILENDITGVLDHTFCVEHNAYGEIIQHELKPNGKSIPVNEENKKEYVRLYVNWRFLRGIEAQFLALQKGFNEVIPQHLLKTFDEKELELIICGLGKIDVNDWKVNTRLKHCTPDSNIVKWFWKAVEFFDEERRARLLQFVTGSSRVPLQGFKALQGAAGPRLFTIHQIDACTNNLPKAHTCFNRIDIPPYESYEKLYEKLLTAIEETCGFAVE</sequence>
<dbReference type="EC" id="2.3.2.26" evidence="4"/>
<dbReference type="EMBL" id="AF310676">
    <property type="protein sequence ID" value="AAG45422.1"/>
    <property type="molecule type" value="mRNA"/>
</dbReference>
<dbReference type="EMBL" id="AF301463">
    <property type="protein sequence ID" value="AAG25641.1"/>
    <property type="molecule type" value="mRNA"/>
</dbReference>
<dbReference type="EMBL" id="AY014180">
    <property type="protein sequence ID" value="AAG50421.1"/>
    <property type="molecule type" value="mRNA"/>
</dbReference>
<dbReference type="EMBL" id="BC093876">
    <property type="protein sequence ID" value="AAH93876.1"/>
    <property type="molecule type" value="mRNA"/>
</dbReference>
<dbReference type="EMBL" id="BC111945">
    <property type="protein sequence ID" value="AAI11946.1"/>
    <property type="molecule type" value="mRNA"/>
</dbReference>
<dbReference type="CCDS" id="CCDS32707.1"/>
<dbReference type="RefSeq" id="NP_073576.1">
    <property type="nucleotide sequence ID" value="NM_022739.4"/>
</dbReference>
<dbReference type="PDB" id="1ZVD">
    <property type="method" value="X-ray"/>
    <property type="resolution" value="2.10 A"/>
    <property type="chains" value="A=369-748"/>
</dbReference>
<dbReference type="PDB" id="2DJY">
    <property type="method" value="NMR"/>
    <property type="chains" value="A=297-333"/>
</dbReference>
<dbReference type="PDB" id="2JQZ">
    <property type="method" value="NMR"/>
    <property type="chains" value="A=10-140"/>
</dbReference>
<dbReference type="PDB" id="2KXQ">
    <property type="method" value="NMR"/>
    <property type="chains" value="A=250-333"/>
</dbReference>
<dbReference type="PDB" id="2LTZ">
    <property type="method" value="NMR"/>
    <property type="chains" value="A=297-333"/>
</dbReference>
<dbReference type="PDB" id="6FX4">
    <property type="method" value="X-ray"/>
    <property type="resolution" value="2.50 A"/>
    <property type="chains" value="A/C=631-745"/>
</dbReference>
<dbReference type="PDB" id="7M3Q">
    <property type="method" value="X-ray"/>
    <property type="resolution" value="2.50 A"/>
    <property type="chains" value="A=366-748"/>
</dbReference>
<dbReference type="PDBsum" id="1ZVD"/>
<dbReference type="PDBsum" id="2DJY"/>
<dbReference type="PDBsum" id="2JQZ"/>
<dbReference type="PDBsum" id="2KXQ"/>
<dbReference type="PDBsum" id="2LTZ"/>
<dbReference type="PDBsum" id="6FX4"/>
<dbReference type="PDBsum" id="7M3Q"/>
<dbReference type="BMRB" id="Q9HAU4"/>
<dbReference type="SMR" id="Q9HAU4"/>
<dbReference type="BioGRID" id="122265">
    <property type="interactions" value="196"/>
</dbReference>
<dbReference type="CORUM" id="Q9HAU4"/>
<dbReference type="DIP" id="DIP-33061N"/>
<dbReference type="FunCoup" id="Q9HAU4">
    <property type="interactions" value="3521"/>
</dbReference>
<dbReference type="IntAct" id="Q9HAU4">
    <property type="interactions" value="91"/>
</dbReference>
<dbReference type="MINT" id="Q9HAU4"/>
<dbReference type="STRING" id="9606.ENSP00000262435"/>
<dbReference type="BindingDB" id="Q9HAU4"/>
<dbReference type="ChEMBL" id="CHEMBL4523460"/>
<dbReference type="GlyGen" id="Q9HAU4">
    <property type="glycosylation" value="2 sites, 1 N-linked glycan (1 site), 1 O-linked glycan (1 site)"/>
</dbReference>
<dbReference type="iPTMnet" id="Q9HAU4"/>
<dbReference type="PhosphoSitePlus" id="Q9HAU4"/>
<dbReference type="BioMuta" id="SMURF2"/>
<dbReference type="DMDM" id="17865624"/>
<dbReference type="jPOST" id="Q9HAU4"/>
<dbReference type="MassIVE" id="Q9HAU4"/>
<dbReference type="PaxDb" id="9606-ENSP00000262435"/>
<dbReference type="PeptideAtlas" id="Q9HAU4"/>
<dbReference type="ProteomicsDB" id="81439"/>
<dbReference type="Pumba" id="Q9HAU4"/>
<dbReference type="Antibodypedia" id="31598">
    <property type="antibodies" value="345 antibodies from 35 providers"/>
</dbReference>
<dbReference type="DNASU" id="64750"/>
<dbReference type="Ensembl" id="ENST00000262435.14">
    <property type="protein sequence ID" value="ENSP00000262435.9"/>
    <property type="gene ID" value="ENSG00000108854.16"/>
</dbReference>
<dbReference type="GeneID" id="64750"/>
<dbReference type="KEGG" id="hsa:64750"/>
<dbReference type="MANE-Select" id="ENST00000262435.14">
    <property type="protein sequence ID" value="ENSP00000262435.9"/>
    <property type="RefSeq nucleotide sequence ID" value="NM_022739.4"/>
    <property type="RefSeq protein sequence ID" value="NP_073576.1"/>
</dbReference>
<dbReference type="UCSC" id="uc002jep.2">
    <property type="organism name" value="human"/>
</dbReference>
<dbReference type="AGR" id="HGNC:16809"/>
<dbReference type="CTD" id="64750"/>
<dbReference type="DisGeNET" id="64750"/>
<dbReference type="GeneCards" id="SMURF2"/>
<dbReference type="HGNC" id="HGNC:16809">
    <property type="gene designation" value="SMURF2"/>
</dbReference>
<dbReference type="HPA" id="ENSG00000108854">
    <property type="expression patterns" value="Low tissue specificity"/>
</dbReference>
<dbReference type="MIM" id="605532">
    <property type="type" value="gene"/>
</dbReference>
<dbReference type="neXtProt" id="NX_Q9HAU4"/>
<dbReference type="OpenTargets" id="ENSG00000108854"/>
<dbReference type="PharmGKB" id="PA134985524"/>
<dbReference type="VEuPathDB" id="HostDB:ENSG00000108854"/>
<dbReference type="eggNOG" id="KOG0940">
    <property type="taxonomic scope" value="Eukaryota"/>
</dbReference>
<dbReference type="GeneTree" id="ENSGT00940000155563"/>
<dbReference type="HOGENOM" id="CLU_002173_1_1_1"/>
<dbReference type="InParanoid" id="Q9HAU4"/>
<dbReference type="OMA" id="LIFLICE"/>
<dbReference type="OrthoDB" id="8068875at2759"/>
<dbReference type="PAN-GO" id="Q9HAU4">
    <property type="GO annotations" value="6 GO annotations based on evolutionary models"/>
</dbReference>
<dbReference type="PhylomeDB" id="Q9HAU4"/>
<dbReference type="TreeFam" id="TF323658"/>
<dbReference type="BRENDA" id="2.3.2.26">
    <property type="organism ID" value="2681"/>
</dbReference>
<dbReference type="PathwayCommons" id="Q9HAU4"/>
<dbReference type="Reactome" id="R-HSA-201451">
    <property type="pathway name" value="Signaling by BMP"/>
</dbReference>
<dbReference type="Reactome" id="R-HSA-2173788">
    <property type="pathway name" value="Downregulation of TGF-beta receptor signaling"/>
</dbReference>
<dbReference type="Reactome" id="R-HSA-2173795">
    <property type="pathway name" value="Downregulation of SMAD2/3:SMAD4 transcriptional activity"/>
</dbReference>
<dbReference type="Reactome" id="R-HSA-4608870">
    <property type="pathway name" value="Asymmetric localization of PCP proteins"/>
</dbReference>
<dbReference type="Reactome" id="R-HSA-4641257">
    <property type="pathway name" value="Degradation of AXIN"/>
</dbReference>
<dbReference type="Reactome" id="R-HSA-5632684">
    <property type="pathway name" value="Hedgehog 'on' state"/>
</dbReference>
<dbReference type="Reactome" id="R-HSA-5689880">
    <property type="pathway name" value="Ub-specific processing proteases"/>
</dbReference>
<dbReference type="Reactome" id="R-HSA-8941858">
    <property type="pathway name" value="Regulation of RUNX3 expression and activity"/>
</dbReference>
<dbReference type="Reactome" id="R-HSA-983168">
    <property type="pathway name" value="Antigen processing: Ubiquitination &amp; Proteasome degradation"/>
</dbReference>
<dbReference type="SignaLink" id="Q9HAU4"/>
<dbReference type="SIGNOR" id="Q9HAU4"/>
<dbReference type="UniPathway" id="UPA00143"/>
<dbReference type="BioGRID-ORCS" id="64750">
    <property type="hits" value="42 hits in 1199 CRISPR screens"/>
</dbReference>
<dbReference type="CD-CODE" id="8C2F96ED">
    <property type="entry name" value="Centrosome"/>
</dbReference>
<dbReference type="ChiTaRS" id="SMURF2">
    <property type="organism name" value="human"/>
</dbReference>
<dbReference type="EvolutionaryTrace" id="Q9HAU4"/>
<dbReference type="GeneWiki" id="SMURF2"/>
<dbReference type="GenomeRNAi" id="64750"/>
<dbReference type="Pharos" id="Q9HAU4">
    <property type="development level" value="Tchem"/>
</dbReference>
<dbReference type="PRO" id="PR:Q9HAU4"/>
<dbReference type="Proteomes" id="UP000005640">
    <property type="component" value="Chromosome 17"/>
</dbReference>
<dbReference type="RNAct" id="Q9HAU4">
    <property type="molecule type" value="protein"/>
</dbReference>
<dbReference type="Bgee" id="ENSG00000108854">
    <property type="expression patterns" value="Expressed in buccal mucosa cell and 206 other cell types or tissues"/>
</dbReference>
<dbReference type="ExpressionAtlas" id="Q9HAU4">
    <property type="expression patterns" value="baseline and differential"/>
</dbReference>
<dbReference type="GO" id="GO:0005737">
    <property type="term" value="C:cytoplasm"/>
    <property type="evidence" value="ECO:0000318"/>
    <property type="project" value="GO_Central"/>
</dbReference>
<dbReference type="GO" id="GO:0005829">
    <property type="term" value="C:cytosol"/>
    <property type="evidence" value="ECO:0000304"/>
    <property type="project" value="Reactome"/>
</dbReference>
<dbReference type="GO" id="GO:0045121">
    <property type="term" value="C:membrane raft"/>
    <property type="evidence" value="ECO:0007669"/>
    <property type="project" value="UniProtKB-SubCell"/>
</dbReference>
<dbReference type="GO" id="GO:0016607">
    <property type="term" value="C:nuclear speck"/>
    <property type="evidence" value="ECO:0000314"/>
    <property type="project" value="HPA"/>
</dbReference>
<dbReference type="GO" id="GO:0005654">
    <property type="term" value="C:nucleoplasm"/>
    <property type="evidence" value="ECO:0000304"/>
    <property type="project" value="Reactome"/>
</dbReference>
<dbReference type="GO" id="GO:0005634">
    <property type="term" value="C:nucleus"/>
    <property type="evidence" value="ECO:0000303"/>
    <property type="project" value="UniProtKB"/>
</dbReference>
<dbReference type="GO" id="GO:0005886">
    <property type="term" value="C:plasma membrane"/>
    <property type="evidence" value="ECO:0007669"/>
    <property type="project" value="UniProtKB-SubCell"/>
</dbReference>
<dbReference type="GO" id="GO:0000151">
    <property type="term" value="C:ubiquitin ligase complex"/>
    <property type="evidence" value="ECO:0000314"/>
    <property type="project" value="UniProtKB"/>
</dbReference>
<dbReference type="GO" id="GO:0042802">
    <property type="term" value="F:identical protein binding"/>
    <property type="evidence" value="ECO:0000353"/>
    <property type="project" value="IntAct"/>
</dbReference>
<dbReference type="GO" id="GO:0046332">
    <property type="term" value="F:SMAD binding"/>
    <property type="evidence" value="ECO:0000353"/>
    <property type="project" value="BHF-UCL"/>
</dbReference>
<dbReference type="GO" id="GO:0061630">
    <property type="term" value="F:ubiquitin protein ligase activity"/>
    <property type="evidence" value="ECO:0000314"/>
    <property type="project" value="BHF-UCL"/>
</dbReference>
<dbReference type="GO" id="GO:0004842">
    <property type="term" value="F:ubiquitin-protein transferase activity"/>
    <property type="evidence" value="ECO:0000314"/>
    <property type="project" value="UniProtKB"/>
</dbReference>
<dbReference type="GO" id="GO:0030514">
    <property type="term" value="P:negative regulation of BMP signaling pathway"/>
    <property type="evidence" value="ECO:0000318"/>
    <property type="project" value="GO_Central"/>
</dbReference>
<dbReference type="GO" id="GO:0045892">
    <property type="term" value="P:negative regulation of DNA-templated transcription"/>
    <property type="evidence" value="ECO:0000303"/>
    <property type="project" value="UniProtKB"/>
</dbReference>
<dbReference type="GO" id="GO:0000122">
    <property type="term" value="P:negative regulation of transcription by RNA polymerase II"/>
    <property type="evidence" value="ECO:0000304"/>
    <property type="project" value="Reactome"/>
</dbReference>
<dbReference type="GO" id="GO:0030512">
    <property type="term" value="P:negative regulation of transforming growth factor beta receptor signaling pathway"/>
    <property type="evidence" value="ECO:0000314"/>
    <property type="project" value="CACAO"/>
</dbReference>
<dbReference type="GO" id="GO:0090263">
    <property type="term" value="P:positive regulation of canonical Wnt signaling pathway"/>
    <property type="evidence" value="ECO:0000304"/>
    <property type="project" value="Reactome"/>
</dbReference>
<dbReference type="GO" id="GO:1901165">
    <property type="term" value="P:positive regulation of trophoblast cell migration"/>
    <property type="evidence" value="ECO:0000314"/>
    <property type="project" value="CACAO"/>
</dbReference>
<dbReference type="GO" id="GO:0043161">
    <property type="term" value="P:proteasome-mediated ubiquitin-dependent protein catabolic process"/>
    <property type="evidence" value="ECO:0000318"/>
    <property type="project" value="GO_Central"/>
</dbReference>
<dbReference type="GO" id="GO:0016567">
    <property type="term" value="P:protein ubiquitination"/>
    <property type="evidence" value="ECO:0007669"/>
    <property type="project" value="UniProtKB-UniPathway"/>
</dbReference>
<dbReference type="GO" id="GO:0017015">
    <property type="term" value="P:regulation of transforming growth factor beta receptor signaling pathway"/>
    <property type="evidence" value="ECO:0000303"/>
    <property type="project" value="UniProtKB"/>
</dbReference>
<dbReference type="GO" id="GO:0006511">
    <property type="term" value="P:ubiquitin-dependent protein catabolic process"/>
    <property type="evidence" value="ECO:0000314"/>
    <property type="project" value="UniProtKB"/>
</dbReference>
<dbReference type="GO" id="GO:0060071">
    <property type="term" value="P:Wnt signaling pathway, planar cell polarity pathway"/>
    <property type="evidence" value="ECO:0000304"/>
    <property type="project" value="Reactome"/>
</dbReference>
<dbReference type="CDD" id="cd08382">
    <property type="entry name" value="C2_Smurf-like"/>
    <property type="match status" value="1"/>
</dbReference>
<dbReference type="CDD" id="cd00078">
    <property type="entry name" value="HECTc"/>
    <property type="match status" value="1"/>
</dbReference>
<dbReference type="CDD" id="cd00201">
    <property type="entry name" value="WW"/>
    <property type="match status" value="3"/>
</dbReference>
<dbReference type="FunFam" id="2.20.70.10:FF:000017">
    <property type="entry name" value="E3 ubiquitin-protein ligase"/>
    <property type="match status" value="1"/>
</dbReference>
<dbReference type="FunFam" id="2.20.70.10:FF:000026">
    <property type="entry name" value="E3 ubiquitin-protein ligase"/>
    <property type="match status" value="1"/>
</dbReference>
<dbReference type="FunFam" id="2.20.70.10:FF:000047">
    <property type="entry name" value="E3 ubiquitin-protein ligase"/>
    <property type="match status" value="1"/>
</dbReference>
<dbReference type="FunFam" id="2.60.40.150:FF:000024">
    <property type="entry name" value="E3 ubiquitin-protein ligase"/>
    <property type="match status" value="1"/>
</dbReference>
<dbReference type="FunFam" id="3.30.2160.10:FF:000001">
    <property type="entry name" value="E3 ubiquitin-protein ligase NEDD4-like"/>
    <property type="match status" value="1"/>
</dbReference>
<dbReference type="FunFam" id="3.30.2410.10:FF:000014">
    <property type="entry name" value="E3 ubiquitin-protein ligase SMURF1"/>
    <property type="match status" value="1"/>
</dbReference>
<dbReference type="FunFam" id="3.90.1750.10:FF:000007">
    <property type="entry name" value="E3 ubiquitin-protein ligase SMURF2"/>
    <property type="match status" value="1"/>
</dbReference>
<dbReference type="Gene3D" id="2.20.70.10">
    <property type="match status" value="2"/>
</dbReference>
<dbReference type="Gene3D" id="2.60.40.150">
    <property type="entry name" value="C2 domain"/>
    <property type="match status" value="1"/>
</dbReference>
<dbReference type="Gene3D" id="3.30.2160.10">
    <property type="entry name" value="Hect, E3 ligase catalytic domain"/>
    <property type="match status" value="1"/>
</dbReference>
<dbReference type="Gene3D" id="3.30.2410.10">
    <property type="entry name" value="Hect, E3 ligase catalytic domain"/>
    <property type="match status" value="1"/>
</dbReference>
<dbReference type="Gene3D" id="3.90.1750.10">
    <property type="entry name" value="Hect, E3 ligase catalytic domains"/>
    <property type="match status" value="1"/>
</dbReference>
<dbReference type="IDEAL" id="IID00223"/>
<dbReference type="InterPro" id="IPR000008">
    <property type="entry name" value="C2_dom"/>
</dbReference>
<dbReference type="InterPro" id="IPR035892">
    <property type="entry name" value="C2_domain_sf"/>
</dbReference>
<dbReference type="InterPro" id="IPR024928">
    <property type="entry name" value="E3_ub_ligase_SMURF1"/>
</dbReference>
<dbReference type="InterPro" id="IPR050409">
    <property type="entry name" value="E3_ubiq-protein_ligase"/>
</dbReference>
<dbReference type="InterPro" id="IPR000569">
    <property type="entry name" value="HECT_dom"/>
</dbReference>
<dbReference type="InterPro" id="IPR035983">
    <property type="entry name" value="Hect_E3_ubiquitin_ligase"/>
</dbReference>
<dbReference type="InterPro" id="IPR001202">
    <property type="entry name" value="WW_dom"/>
</dbReference>
<dbReference type="InterPro" id="IPR036020">
    <property type="entry name" value="WW_dom_sf"/>
</dbReference>
<dbReference type="PANTHER" id="PTHR11254:SF300">
    <property type="entry name" value="E3 UBIQUITIN-PROTEIN LIGASE SMURF2"/>
    <property type="match status" value="1"/>
</dbReference>
<dbReference type="PANTHER" id="PTHR11254">
    <property type="entry name" value="HECT DOMAIN UBIQUITIN-PROTEIN LIGASE"/>
    <property type="match status" value="1"/>
</dbReference>
<dbReference type="Pfam" id="PF00168">
    <property type="entry name" value="C2"/>
    <property type="match status" value="1"/>
</dbReference>
<dbReference type="Pfam" id="PF00632">
    <property type="entry name" value="HECT"/>
    <property type="match status" value="1"/>
</dbReference>
<dbReference type="Pfam" id="PF00397">
    <property type="entry name" value="WW"/>
    <property type="match status" value="3"/>
</dbReference>
<dbReference type="PIRSF" id="PIRSF001569">
    <property type="entry name" value="E3_ub_ligase_SMURF1"/>
    <property type="match status" value="1"/>
</dbReference>
<dbReference type="SMART" id="SM00239">
    <property type="entry name" value="C2"/>
    <property type="match status" value="1"/>
</dbReference>
<dbReference type="SMART" id="SM00119">
    <property type="entry name" value="HECTc"/>
    <property type="match status" value="1"/>
</dbReference>
<dbReference type="SMART" id="SM00456">
    <property type="entry name" value="WW"/>
    <property type="match status" value="3"/>
</dbReference>
<dbReference type="SUPFAM" id="SSF49562">
    <property type="entry name" value="C2 domain (Calcium/lipid-binding domain, CaLB)"/>
    <property type="match status" value="1"/>
</dbReference>
<dbReference type="SUPFAM" id="SSF56204">
    <property type="entry name" value="Hect, E3 ligase catalytic domain"/>
    <property type="match status" value="1"/>
</dbReference>
<dbReference type="SUPFAM" id="SSF51045">
    <property type="entry name" value="WW domain"/>
    <property type="match status" value="3"/>
</dbReference>
<dbReference type="PROSITE" id="PS50004">
    <property type="entry name" value="C2"/>
    <property type="match status" value="1"/>
</dbReference>
<dbReference type="PROSITE" id="PS50237">
    <property type="entry name" value="HECT"/>
    <property type="match status" value="1"/>
</dbReference>
<dbReference type="PROSITE" id="PS01159">
    <property type="entry name" value="WW_DOMAIN_1"/>
    <property type="match status" value="1"/>
</dbReference>
<dbReference type="PROSITE" id="PS50020">
    <property type="entry name" value="WW_DOMAIN_2"/>
    <property type="match status" value="3"/>
</dbReference>
<organism>
    <name type="scientific">Homo sapiens</name>
    <name type="common">Human</name>
    <dbReference type="NCBI Taxonomy" id="9606"/>
    <lineage>
        <taxon>Eukaryota</taxon>
        <taxon>Metazoa</taxon>
        <taxon>Chordata</taxon>
        <taxon>Craniata</taxon>
        <taxon>Vertebrata</taxon>
        <taxon>Euteleostomi</taxon>
        <taxon>Mammalia</taxon>
        <taxon>Eutheria</taxon>
        <taxon>Euarchontoglires</taxon>
        <taxon>Primates</taxon>
        <taxon>Haplorrhini</taxon>
        <taxon>Catarrhini</taxon>
        <taxon>Hominidae</taxon>
        <taxon>Homo</taxon>
    </lineage>
</organism>